<comment type="function">
    <text evidence="1">Involved in the transport of maltose and maltodextrins.</text>
</comment>
<comment type="catalytic activity">
    <reaction evidence="1">
        <text>beta-maltose(in) = beta-maltose(out)</text>
        <dbReference type="Rhea" id="RHEA:29731"/>
        <dbReference type="ChEBI" id="CHEBI:18147"/>
    </reaction>
</comment>
<comment type="subunit">
    <text evidence="1">Homotrimer formed of three 18-stranded antiparallel beta-barrels, containing three independent channels.</text>
</comment>
<comment type="subcellular location">
    <subcellularLocation>
        <location evidence="1">Cell outer membrane</location>
        <topology evidence="1">Multi-pass membrane protein</topology>
    </subcellularLocation>
</comment>
<comment type="induction">
    <text evidence="1">By maltose.</text>
</comment>
<comment type="similarity">
    <text evidence="1">Belongs to the porin LamB (TC 1.B.3) family.</text>
</comment>
<accession>A9N1K8</accession>
<reference key="1">
    <citation type="submission" date="2007-11" db="EMBL/GenBank/DDBJ databases">
        <authorList>
            <consortium name="The Salmonella enterica serovar Paratyphi B Genome Sequencing Project"/>
            <person name="McClelland M."/>
            <person name="Sanderson E.K."/>
            <person name="Porwollik S."/>
            <person name="Spieth J."/>
            <person name="Clifton W.S."/>
            <person name="Fulton R."/>
            <person name="Cordes M."/>
            <person name="Wollam A."/>
            <person name="Shah N."/>
            <person name="Pepin K."/>
            <person name="Bhonagiri V."/>
            <person name="Nash W."/>
            <person name="Johnson M."/>
            <person name="Thiruvilangam P."/>
            <person name="Wilson R."/>
        </authorList>
    </citation>
    <scope>NUCLEOTIDE SEQUENCE [LARGE SCALE GENOMIC DNA]</scope>
    <source>
        <strain>ATCC BAA-1250 / SPB7</strain>
    </source>
</reference>
<protein>
    <recommendedName>
        <fullName evidence="1">Maltoporin</fullName>
    </recommendedName>
    <alternativeName>
        <fullName evidence="1">Maltose-inducible porin</fullName>
    </alternativeName>
</protein>
<sequence length="452" mass="50560">MMITLRKLPLAVAVAAGVMSAQAMAVDFHGYARSGIGWTGSGGEQQCFQATGAQSKYRLGNECETYAELKLGQEVWKEGDKSFYFDTNVAYSVNQQNDWESTDPAFREANVQGKNLIEWLPGSTIWAGKRFYQRHDVHMIDFYYWDISGPGAGIENIDLGFGKLSLAATRSTEAGGSYTFSSQNIYDEVKDTANDVFDVRLAGLQTNPDGVLELGVDYGRANTTDGYKLADGASKDGWMFTAEHTQSMLKGYNKFVVQYATDAMTTQGKGQARGSDGSSSFTEELPDGTKINYANKVINNNGDMWRILDHGAISLGDKWDLMYVGMYQNIDWDNNLGTEWWTVGVRPMYKWTPIMSTLLEVGYDNVKSQQTGDRNNQYKITLAQQWQAGDSIWSRPAIRIFATYAKWDEKWGYIKDGDNISRYAAATNSGISTNSRGDSDEWTFGAQMEIWW</sequence>
<name>LAMB_SALPB</name>
<keyword id="KW-0998">Cell outer membrane</keyword>
<keyword id="KW-0406">Ion transport</keyword>
<keyword id="KW-0472">Membrane</keyword>
<keyword id="KW-0626">Porin</keyword>
<keyword id="KW-0732">Signal</keyword>
<keyword id="KW-0762">Sugar transport</keyword>
<keyword id="KW-0812">Transmembrane</keyword>
<keyword id="KW-1134">Transmembrane beta strand</keyword>
<keyword id="KW-0813">Transport</keyword>
<proteinExistence type="inferred from homology"/>
<dbReference type="EMBL" id="CP000886">
    <property type="protein sequence ID" value="ABX70489.1"/>
    <property type="molecule type" value="Genomic_DNA"/>
</dbReference>
<dbReference type="RefSeq" id="WP_000973642.1">
    <property type="nucleotide sequence ID" value="NC_010102.1"/>
</dbReference>
<dbReference type="BMRB" id="A9N1K8"/>
<dbReference type="SMR" id="A9N1K8"/>
<dbReference type="KEGG" id="spq:SPAB_05212"/>
<dbReference type="PATRIC" id="fig|1016998.12.peg.4881"/>
<dbReference type="HOGENOM" id="CLU_032473_4_1_6"/>
<dbReference type="BioCyc" id="SENT1016998:SPAB_RS21230-MONOMER"/>
<dbReference type="Proteomes" id="UP000008556">
    <property type="component" value="Chromosome"/>
</dbReference>
<dbReference type="GO" id="GO:0009279">
    <property type="term" value="C:cell outer membrane"/>
    <property type="evidence" value="ECO:0007669"/>
    <property type="project" value="UniProtKB-SubCell"/>
</dbReference>
<dbReference type="GO" id="GO:0046930">
    <property type="term" value="C:pore complex"/>
    <property type="evidence" value="ECO:0007669"/>
    <property type="project" value="UniProtKB-KW"/>
</dbReference>
<dbReference type="GO" id="GO:0042958">
    <property type="term" value="F:maltodextrin transmembrane transporter activity"/>
    <property type="evidence" value="ECO:0007669"/>
    <property type="project" value="InterPro"/>
</dbReference>
<dbReference type="GO" id="GO:0015481">
    <property type="term" value="F:maltose transporting porin activity"/>
    <property type="evidence" value="ECO:0007669"/>
    <property type="project" value="InterPro"/>
</dbReference>
<dbReference type="GO" id="GO:0006811">
    <property type="term" value="P:monoatomic ion transport"/>
    <property type="evidence" value="ECO:0007669"/>
    <property type="project" value="UniProtKB-KW"/>
</dbReference>
<dbReference type="CDD" id="cd01346">
    <property type="entry name" value="Maltoporin-like"/>
    <property type="match status" value="1"/>
</dbReference>
<dbReference type="FunFam" id="2.40.170.10:FF:000001">
    <property type="entry name" value="Maltoporin"/>
    <property type="match status" value="1"/>
</dbReference>
<dbReference type="Gene3D" id="2.40.170.10">
    <property type="entry name" value="Porin, LamB type"/>
    <property type="match status" value="1"/>
</dbReference>
<dbReference type="HAMAP" id="MF_01301">
    <property type="entry name" value="LamB"/>
    <property type="match status" value="1"/>
</dbReference>
<dbReference type="InterPro" id="IPR050286">
    <property type="entry name" value="G_neg_Bact_CarbUptk_Porin"/>
</dbReference>
<dbReference type="InterPro" id="IPR023738">
    <property type="entry name" value="Maltoporin"/>
</dbReference>
<dbReference type="InterPro" id="IPR003192">
    <property type="entry name" value="Porin_LamB"/>
</dbReference>
<dbReference type="InterPro" id="IPR036998">
    <property type="entry name" value="Porin_LamB_sf"/>
</dbReference>
<dbReference type="NCBIfam" id="NF006860">
    <property type="entry name" value="PRK09360.1"/>
    <property type="match status" value="1"/>
</dbReference>
<dbReference type="PANTHER" id="PTHR38762">
    <property type="entry name" value="CRYPTIC OUTER MEMBRANE PORIN BGLH-RELATED"/>
    <property type="match status" value="1"/>
</dbReference>
<dbReference type="PANTHER" id="PTHR38762:SF1">
    <property type="entry name" value="CRYPTIC OUTER MEMBRANE PORIN BGLH-RELATED"/>
    <property type="match status" value="1"/>
</dbReference>
<dbReference type="Pfam" id="PF02264">
    <property type="entry name" value="LamB"/>
    <property type="match status" value="1"/>
</dbReference>
<dbReference type="SUPFAM" id="SSF56935">
    <property type="entry name" value="Porins"/>
    <property type="match status" value="1"/>
</dbReference>
<organism>
    <name type="scientific">Salmonella paratyphi B (strain ATCC BAA-1250 / SPB7)</name>
    <dbReference type="NCBI Taxonomy" id="1016998"/>
    <lineage>
        <taxon>Bacteria</taxon>
        <taxon>Pseudomonadati</taxon>
        <taxon>Pseudomonadota</taxon>
        <taxon>Gammaproteobacteria</taxon>
        <taxon>Enterobacterales</taxon>
        <taxon>Enterobacteriaceae</taxon>
        <taxon>Salmonella</taxon>
    </lineage>
</organism>
<evidence type="ECO:0000255" key="1">
    <source>
        <dbReference type="HAMAP-Rule" id="MF_01301"/>
    </source>
</evidence>
<feature type="signal peptide" evidence="1">
    <location>
        <begin position="1"/>
        <end position="25"/>
    </location>
</feature>
<feature type="chain" id="PRO_1000085906" description="Maltoporin">
    <location>
        <begin position="26"/>
        <end position="452"/>
    </location>
</feature>
<feature type="site" description="Greasy slide, important in sugar transport" evidence="1">
    <location>
        <position position="31"/>
    </location>
</feature>
<feature type="site" description="Greasy slide, important in sugar transport" evidence="1">
    <location>
        <position position="66"/>
    </location>
</feature>
<feature type="site" description="Greasy slide, important in sugar transport" evidence="1">
    <location>
        <position position="99"/>
    </location>
</feature>
<feature type="site" description="Important in sugar transport" evidence="1">
    <location>
        <position position="143"/>
    </location>
</feature>
<feature type="site" description="Greasy slide, important in sugar transport" evidence="1">
    <location>
        <position position="252"/>
    </location>
</feature>
<feature type="site" description="Greasy slide, important in sugar transport" evidence="1">
    <location>
        <position position="393"/>
    </location>
</feature>
<feature type="site" description="Greasy slide, important in sugar transport" evidence="1">
    <location>
        <position position="451"/>
    </location>
</feature>
<gene>
    <name evidence="1" type="primary">lamB</name>
    <name type="ordered locus">SPAB_05212</name>
</gene>